<dbReference type="EC" id="4.2.1.9" evidence="1"/>
<dbReference type="EMBL" id="CP001321">
    <property type="protein sequence ID" value="ACL32408.1"/>
    <property type="molecule type" value="Genomic_DNA"/>
</dbReference>
<dbReference type="RefSeq" id="WP_012621901.1">
    <property type="nucleotide sequence ID" value="NC_011852.1"/>
</dbReference>
<dbReference type="SMR" id="B8F506"/>
<dbReference type="STRING" id="557723.HAPS_0768"/>
<dbReference type="KEGG" id="hap:HAPS_0768"/>
<dbReference type="PATRIC" id="fig|557723.8.peg.769"/>
<dbReference type="HOGENOM" id="CLU_014271_4_2_6"/>
<dbReference type="UniPathway" id="UPA00047">
    <property type="reaction ID" value="UER00057"/>
</dbReference>
<dbReference type="UniPathway" id="UPA00049">
    <property type="reaction ID" value="UER00061"/>
</dbReference>
<dbReference type="Proteomes" id="UP000006743">
    <property type="component" value="Chromosome"/>
</dbReference>
<dbReference type="GO" id="GO:0005829">
    <property type="term" value="C:cytosol"/>
    <property type="evidence" value="ECO:0007669"/>
    <property type="project" value="TreeGrafter"/>
</dbReference>
<dbReference type="GO" id="GO:0051537">
    <property type="term" value="F:2 iron, 2 sulfur cluster binding"/>
    <property type="evidence" value="ECO:0007669"/>
    <property type="project" value="UniProtKB-UniRule"/>
</dbReference>
<dbReference type="GO" id="GO:0004160">
    <property type="term" value="F:dihydroxy-acid dehydratase activity"/>
    <property type="evidence" value="ECO:0007669"/>
    <property type="project" value="UniProtKB-UniRule"/>
</dbReference>
<dbReference type="GO" id="GO:0000287">
    <property type="term" value="F:magnesium ion binding"/>
    <property type="evidence" value="ECO:0007669"/>
    <property type="project" value="UniProtKB-UniRule"/>
</dbReference>
<dbReference type="GO" id="GO:0009097">
    <property type="term" value="P:isoleucine biosynthetic process"/>
    <property type="evidence" value="ECO:0007669"/>
    <property type="project" value="UniProtKB-UniRule"/>
</dbReference>
<dbReference type="GO" id="GO:0009099">
    <property type="term" value="P:L-valine biosynthetic process"/>
    <property type="evidence" value="ECO:0007669"/>
    <property type="project" value="UniProtKB-UniRule"/>
</dbReference>
<dbReference type="FunFam" id="3.50.30.80:FF:000001">
    <property type="entry name" value="Dihydroxy-acid dehydratase"/>
    <property type="match status" value="1"/>
</dbReference>
<dbReference type="Gene3D" id="3.50.30.80">
    <property type="entry name" value="IlvD/EDD C-terminal domain-like"/>
    <property type="match status" value="1"/>
</dbReference>
<dbReference type="HAMAP" id="MF_00012">
    <property type="entry name" value="IlvD"/>
    <property type="match status" value="1"/>
</dbReference>
<dbReference type="InterPro" id="IPR042096">
    <property type="entry name" value="Dihydro-acid_dehy_C"/>
</dbReference>
<dbReference type="InterPro" id="IPR004404">
    <property type="entry name" value="DihydroxyA_deHydtase"/>
</dbReference>
<dbReference type="InterPro" id="IPR020558">
    <property type="entry name" value="DiOHA_6PGluconate_deHydtase_CS"/>
</dbReference>
<dbReference type="InterPro" id="IPR056740">
    <property type="entry name" value="ILV_EDD_C"/>
</dbReference>
<dbReference type="InterPro" id="IPR000581">
    <property type="entry name" value="ILV_EDD_N"/>
</dbReference>
<dbReference type="InterPro" id="IPR037237">
    <property type="entry name" value="IlvD/EDD_N"/>
</dbReference>
<dbReference type="NCBIfam" id="TIGR00110">
    <property type="entry name" value="ilvD"/>
    <property type="match status" value="1"/>
</dbReference>
<dbReference type="NCBIfam" id="NF009103">
    <property type="entry name" value="PRK12448.1"/>
    <property type="match status" value="1"/>
</dbReference>
<dbReference type="PANTHER" id="PTHR43661">
    <property type="entry name" value="D-XYLONATE DEHYDRATASE"/>
    <property type="match status" value="1"/>
</dbReference>
<dbReference type="PANTHER" id="PTHR43661:SF3">
    <property type="entry name" value="D-XYLONATE DEHYDRATASE YAGF-RELATED"/>
    <property type="match status" value="1"/>
</dbReference>
<dbReference type="Pfam" id="PF24877">
    <property type="entry name" value="ILV_EDD_C"/>
    <property type="match status" value="1"/>
</dbReference>
<dbReference type="Pfam" id="PF00920">
    <property type="entry name" value="ILVD_EDD_N"/>
    <property type="match status" value="1"/>
</dbReference>
<dbReference type="SUPFAM" id="SSF143975">
    <property type="entry name" value="IlvD/EDD N-terminal domain-like"/>
    <property type="match status" value="1"/>
</dbReference>
<dbReference type="SUPFAM" id="SSF52016">
    <property type="entry name" value="LeuD/IlvD-like"/>
    <property type="match status" value="1"/>
</dbReference>
<dbReference type="PROSITE" id="PS00886">
    <property type="entry name" value="ILVD_EDD_1"/>
    <property type="match status" value="1"/>
</dbReference>
<dbReference type="PROSITE" id="PS00887">
    <property type="entry name" value="ILVD_EDD_2"/>
    <property type="match status" value="1"/>
</dbReference>
<protein>
    <recommendedName>
        <fullName evidence="1">Dihydroxy-acid dehydratase</fullName>
        <shortName evidence="1">DAD</shortName>
        <ecNumber evidence="1">4.2.1.9</ecNumber>
    </recommendedName>
</protein>
<comment type="function">
    <text evidence="1">Functions in the biosynthesis of branched-chain amino acids. Catalyzes the dehydration of (2R,3R)-2,3-dihydroxy-3-methylpentanoate (2,3-dihydroxy-3-methylvalerate) into 2-oxo-3-methylpentanoate (2-oxo-3-methylvalerate) and of (2R)-2,3-dihydroxy-3-methylbutanoate (2,3-dihydroxyisovalerate) into 2-oxo-3-methylbutanoate (2-oxoisovalerate), the penultimate precursor to L-isoleucine and L-valine, respectively.</text>
</comment>
<comment type="catalytic activity">
    <reaction evidence="1">
        <text>(2R)-2,3-dihydroxy-3-methylbutanoate = 3-methyl-2-oxobutanoate + H2O</text>
        <dbReference type="Rhea" id="RHEA:24809"/>
        <dbReference type="ChEBI" id="CHEBI:11851"/>
        <dbReference type="ChEBI" id="CHEBI:15377"/>
        <dbReference type="ChEBI" id="CHEBI:49072"/>
        <dbReference type="EC" id="4.2.1.9"/>
    </reaction>
    <physiologicalReaction direction="left-to-right" evidence="1">
        <dbReference type="Rhea" id="RHEA:24810"/>
    </physiologicalReaction>
</comment>
<comment type="catalytic activity">
    <reaction evidence="1">
        <text>(2R,3R)-2,3-dihydroxy-3-methylpentanoate = (S)-3-methyl-2-oxopentanoate + H2O</text>
        <dbReference type="Rhea" id="RHEA:27694"/>
        <dbReference type="ChEBI" id="CHEBI:15377"/>
        <dbReference type="ChEBI" id="CHEBI:35146"/>
        <dbReference type="ChEBI" id="CHEBI:49258"/>
        <dbReference type="EC" id="4.2.1.9"/>
    </reaction>
    <physiologicalReaction direction="left-to-right" evidence="1">
        <dbReference type="Rhea" id="RHEA:27695"/>
    </physiologicalReaction>
</comment>
<comment type="cofactor">
    <cofactor evidence="1">
        <name>[2Fe-2S] cluster</name>
        <dbReference type="ChEBI" id="CHEBI:190135"/>
    </cofactor>
    <text evidence="1">Binds 1 [2Fe-2S] cluster per subunit. This cluster acts as a Lewis acid cofactor.</text>
</comment>
<comment type="cofactor">
    <cofactor evidence="1">
        <name>Mg(2+)</name>
        <dbReference type="ChEBI" id="CHEBI:18420"/>
    </cofactor>
</comment>
<comment type="pathway">
    <text evidence="1">Amino-acid biosynthesis; L-isoleucine biosynthesis; L-isoleucine from 2-oxobutanoate: step 3/4.</text>
</comment>
<comment type="pathway">
    <text evidence="1">Amino-acid biosynthesis; L-valine biosynthesis; L-valine from pyruvate: step 3/4.</text>
</comment>
<comment type="subunit">
    <text evidence="1">Homodimer.</text>
</comment>
<comment type="similarity">
    <text evidence="1">Belongs to the IlvD/Edd family.</text>
</comment>
<accession>B8F506</accession>
<name>ILVD_GLAP5</name>
<sequence length="611" mass="65246">MPKLRSATSTQGRNMAGARALWRATGMKENDFGKPIIAVVNSFTQFVPGHVHLKDMGQLVAEQIEKAGGVAKEFNTIAVDDGIAMGHGGMLYSLPSRDLIADSVEYMVNAHCADAMVCISNCDKITPGMLMAALRLNIPTIFVSGGPMEAGKTKLSDQIIKLDLVDAMIQGANPNVSDEVSDQIERSACPTCGSCSGMFTANSMNCLTEALGLSLPGNGSCLATHADRKQLFLDAGTQIVELCKKYYEQDDLSVLPRSIATKAAFDNAMSLDIAMGGSTNTVLHLLAAAQEAEVDFTMADIDRLSRQVPCLSKVAPNTQKYHMEDVHRAGGIMAILGELDRAGLLNNQTRTVLGLSLAEQIAKYDIMLTKDEAVHKFFRAGPAGIRTTKAFSQDTRWDTVDDDRQNGCIRSKEFAYSQDGGLAMLSGNIALDGCIVKTAGVDEAILKFKGEAIVFESQEDAVAGILGGKVRAGHVVVIRYEGPKGGPGMQEMLYPTSYLKSMGLGKACALLTDGRFSGGTSGLSIGHCSPEAAAGGLIGLVKDGDTIEIDIPNRKIELVVPEAELAQRRAEQDAKGWKPANREREVSFALKVYGHFATSADKGAVRDKSKI</sequence>
<feature type="chain" id="PRO_1000190667" description="Dihydroxy-acid dehydratase">
    <location>
        <begin position="1"/>
        <end position="611"/>
    </location>
</feature>
<feature type="active site" description="Proton acceptor" evidence="1">
    <location>
        <position position="517"/>
    </location>
</feature>
<feature type="binding site" evidence="1">
    <location>
        <position position="81"/>
    </location>
    <ligand>
        <name>Mg(2+)</name>
        <dbReference type="ChEBI" id="CHEBI:18420"/>
    </ligand>
</feature>
<feature type="binding site" evidence="1">
    <location>
        <position position="122"/>
    </location>
    <ligand>
        <name>[2Fe-2S] cluster</name>
        <dbReference type="ChEBI" id="CHEBI:190135"/>
    </ligand>
</feature>
<feature type="binding site" evidence="1">
    <location>
        <position position="123"/>
    </location>
    <ligand>
        <name>Mg(2+)</name>
        <dbReference type="ChEBI" id="CHEBI:18420"/>
    </ligand>
</feature>
<feature type="binding site" description="via carbamate group" evidence="1">
    <location>
        <position position="124"/>
    </location>
    <ligand>
        <name>Mg(2+)</name>
        <dbReference type="ChEBI" id="CHEBI:18420"/>
    </ligand>
</feature>
<feature type="binding site" evidence="1">
    <location>
        <position position="195"/>
    </location>
    <ligand>
        <name>[2Fe-2S] cluster</name>
        <dbReference type="ChEBI" id="CHEBI:190135"/>
    </ligand>
</feature>
<feature type="binding site" evidence="1">
    <location>
        <position position="491"/>
    </location>
    <ligand>
        <name>Mg(2+)</name>
        <dbReference type="ChEBI" id="CHEBI:18420"/>
    </ligand>
</feature>
<feature type="modified residue" description="N6-carboxylysine" evidence="1">
    <location>
        <position position="124"/>
    </location>
</feature>
<reference key="1">
    <citation type="journal article" date="2009" name="J. Bacteriol.">
        <title>Complete genome sequence of Haemophilus parasuis SH0165.</title>
        <authorList>
            <person name="Yue M."/>
            <person name="Yang F."/>
            <person name="Yang J."/>
            <person name="Bei W."/>
            <person name="Cai X."/>
            <person name="Chen L."/>
            <person name="Dong J."/>
            <person name="Zhou R."/>
            <person name="Jin M."/>
            <person name="Jin Q."/>
            <person name="Chen H."/>
        </authorList>
    </citation>
    <scope>NUCLEOTIDE SEQUENCE [LARGE SCALE GENOMIC DNA]</scope>
    <source>
        <strain>SH0165</strain>
    </source>
</reference>
<gene>
    <name evidence="1" type="primary">ilvD</name>
    <name type="ordered locus">HAPS_0768</name>
</gene>
<keyword id="KW-0001">2Fe-2S</keyword>
<keyword id="KW-0028">Amino-acid biosynthesis</keyword>
<keyword id="KW-0100">Branched-chain amino acid biosynthesis</keyword>
<keyword id="KW-0408">Iron</keyword>
<keyword id="KW-0411">Iron-sulfur</keyword>
<keyword id="KW-0456">Lyase</keyword>
<keyword id="KW-0460">Magnesium</keyword>
<keyword id="KW-0479">Metal-binding</keyword>
<keyword id="KW-1185">Reference proteome</keyword>
<evidence type="ECO:0000255" key="1">
    <source>
        <dbReference type="HAMAP-Rule" id="MF_00012"/>
    </source>
</evidence>
<organism>
    <name type="scientific">Glaesserella parasuis serovar 5 (strain SH0165)</name>
    <name type="common">Haemophilus parasuis</name>
    <dbReference type="NCBI Taxonomy" id="557723"/>
    <lineage>
        <taxon>Bacteria</taxon>
        <taxon>Pseudomonadati</taxon>
        <taxon>Pseudomonadota</taxon>
        <taxon>Gammaproteobacteria</taxon>
        <taxon>Pasteurellales</taxon>
        <taxon>Pasteurellaceae</taxon>
        <taxon>Glaesserella</taxon>
    </lineage>
</organism>
<proteinExistence type="inferred from homology"/>